<keyword id="KW-0045">Antibiotic biosynthesis</keyword>
<keyword id="KW-0963">Cytoplasm</keyword>
<keyword id="KW-0596">Phosphopantetheine</keyword>
<keyword id="KW-0597">Phosphoprotein</keyword>
<keyword id="KW-1185">Reference proteome</keyword>
<comment type="function">
    <text evidence="2 4">Involved in some intermediate steps for the synthesis of the antibiotic polyketide bacillaene which is involved in secondary metabolism.</text>
</comment>
<comment type="pathway">
    <text>Antibiotic biosynthesis; bacillaene biosynthesis.</text>
</comment>
<comment type="subcellular location">
    <subcellularLocation>
        <location evidence="3">Cytoplasm</location>
    </subcellularLocation>
</comment>
<comment type="PTM">
    <text>4'-phosphopantetheine is transferred from CoA to a specific serine of apo-ACP by sfp.</text>
</comment>
<organism>
    <name type="scientific">Bacillus subtilis (strain 168)</name>
    <dbReference type="NCBI Taxonomy" id="224308"/>
    <lineage>
        <taxon>Bacteria</taxon>
        <taxon>Bacillati</taxon>
        <taxon>Bacillota</taxon>
        <taxon>Bacilli</taxon>
        <taxon>Bacillales</taxon>
        <taxon>Bacillaceae</taxon>
        <taxon>Bacillus</taxon>
    </lineage>
</organism>
<protein>
    <recommendedName>
        <fullName>Polyketide biosynthesis acyl-carrier-protein AcpK</fullName>
    </recommendedName>
    <alternativeName>
        <fullName>ACP-II</fullName>
    </alternativeName>
</protein>
<proteinExistence type="evidence at protein level"/>
<feature type="chain" id="PRO_0000180243" description="Polyketide biosynthesis acyl-carrier-protein AcpK">
    <location>
        <begin position="1"/>
        <end position="82"/>
    </location>
</feature>
<feature type="domain" description="Carrier" evidence="1">
    <location>
        <begin position="4"/>
        <end position="79"/>
    </location>
</feature>
<feature type="modified residue" description="O-(pantetheine 4'-phosphoryl)serine" evidence="1">
    <location>
        <position position="39"/>
    </location>
</feature>
<name>ACPK_BACSU</name>
<sequence length="82" mass="9252">MDKQRIFEVLITNICEVLPELDGHRFEPEDQLVELGADSVDRAEIITMVLEDLSLKIPRIELSGVKNIGELAEVLYDKVQSA</sequence>
<accession>Q7PC63</accession>
<accession>Q7WY70</accession>
<dbReference type="EMBL" id="AL009126">
    <property type="protein sequence ID" value="CAE01454.1"/>
    <property type="molecule type" value="Genomic_DNA"/>
</dbReference>
<dbReference type="EMBL" id="BK000019">
    <property type="protein sequence ID" value="DAA00011.1"/>
    <property type="molecule type" value="mRNA"/>
</dbReference>
<dbReference type="RefSeq" id="NP_570904.1">
    <property type="nucleotide sequence ID" value="NC_000964.3"/>
</dbReference>
<dbReference type="RefSeq" id="WP_003231809.1">
    <property type="nucleotide sequence ID" value="NZ_OZ025638.1"/>
</dbReference>
<dbReference type="SMR" id="Q7PC63"/>
<dbReference type="FunCoup" id="Q7PC63">
    <property type="interactions" value="35"/>
</dbReference>
<dbReference type="STRING" id="224308.BSU17130"/>
<dbReference type="PaxDb" id="224308-BSU17130"/>
<dbReference type="EnsemblBacteria" id="CAE01454">
    <property type="protein sequence ID" value="CAE01454"/>
    <property type="gene ID" value="BSU_17130"/>
</dbReference>
<dbReference type="GeneID" id="937952"/>
<dbReference type="KEGG" id="bsu:BSU17130"/>
<dbReference type="PATRIC" id="fig|224308.179.peg.1858"/>
<dbReference type="eggNOG" id="COG0236">
    <property type="taxonomic scope" value="Bacteria"/>
</dbReference>
<dbReference type="InParanoid" id="Q7PC63"/>
<dbReference type="OrthoDB" id="487863at2"/>
<dbReference type="BioCyc" id="BSUB:BSU17130-MONOMER"/>
<dbReference type="UniPathway" id="UPA01003"/>
<dbReference type="Proteomes" id="UP000001570">
    <property type="component" value="Chromosome"/>
</dbReference>
<dbReference type="GO" id="GO:0005829">
    <property type="term" value="C:cytosol"/>
    <property type="evidence" value="ECO:0000318"/>
    <property type="project" value="GO_Central"/>
</dbReference>
<dbReference type="GO" id="GO:0016020">
    <property type="term" value="C:membrane"/>
    <property type="evidence" value="ECO:0007669"/>
    <property type="project" value="GOC"/>
</dbReference>
<dbReference type="GO" id="GO:0000035">
    <property type="term" value="F:acyl binding"/>
    <property type="evidence" value="ECO:0000318"/>
    <property type="project" value="GO_Central"/>
</dbReference>
<dbReference type="GO" id="GO:0000036">
    <property type="term" value="F:acyl carrier activity"/>
    <property type="evidence" value="ECO:0000318"/>
    <property type="project" value="GO_Central"/>
</dbReference>
<dbReference type="GO" id="GO:0017000">
    <property type="term" value="P:antibiotic biosynthetic process"/>
    <property type="evidence" value="ECO:0007669"/>
    <property type="project" value="UniProtKB-KW"/>
</dbReference>
<dbReference type="GO" id="GO:0009245">
    <property type="term" value="P:lipid A biosynthetic process"/>
    <property type="evidence" value="ECO:0000318"/>
    <property type="project" value="GO_Central"/>
</dbReference>
<dbReference type="Gene3D" id="1.10.1200.10">
    <property type="entry name" value="ACP-like"/>
    <property type="match status" value="1"/>
</dbReference>
<dbReference type="InterPro" id="IPR036736">
    <property type="entry name" value="ACP-like_sf"/>
</dbReference>
<dbReference type="InterPro" id="IPR009081">
    <property type="entry name" value="PP-bd_ACP"/>
</dbReference>
<dbReference type="NCBIfam" id="NF005502">
    <property type="entry name" value="PRK07117.1"/>
    <property type="match status" value="1"/>
</dbReference>
<dbReference type="Pfam" id="PF00550">
    <property type="entry name" value="PP-binding"/>
    <property type="match status" value="1"/>
</dbReference>
<dbReference type="SUPFAM" id="SSF47336">
    <property type="entry name" value="ACP-like"/>
    <property type="match status" value="1"/>
</dbReference>
<dbReference type="PROSITE" id="PS50075">
    <property type="entry name" value="CARRIER"/>
    <property type="match status" value="1"/>
</dbReference>
<evidence type="ECO:0000255" key="1">
    <source>
        <dbReference type="PROSITE-ProRule" id="PRU00258"/>
    </source>
</evidence>
<evidence type="ECO:0000269" key="2">
    <source>
    </source>
</evidence>
<evidence type="ECO:0000269" key="3">
    <source>
    </source>
</evidence>
<evidence type="ECO:0000269" key="4">
    <source>
    </source>
</evidence>
<reference key="1">
    <citation type="journal article" date="1997" name="Nature">
        <title>The complete genome sequence of the Gram-positive bacterium Bacillus subtilis.</title>
        <authorList>
            <person name="Kunst F."/>
            <person name="Ogasawara N."/>
            <person name="Moszer I."/>
            <person name="Albertini A.M."/>
            <person name="Alloni G."/>
            <person name="Azevedo V."/>
            <person name="Bertero M.G."/>
            <person name="Bessieres P."/>
            <person name="Bolotin A."/>
            <person name="Borchert S."/>
            <person name="Borriss R."/>
            <person name="Boursier L."/>
            <person name="Brans A."/>
            <person name="Braun M."/>
            <person name="Brignell S.C."/>
            <person name="Bron S."/>
            <person name="Brouillet S."/>
            <person name="Bruschi C.V."/>
            <person name="Caldwell B."/>
            <person name="Capuano V."/>
            <person name="Carter N.M."/>
            <person name="Choi S.-K."/>
            <person name="Codani J.-J."/>
            <person name="Connerton I.F."/>
            <person name="Cummings N.J."/>
            <person name="Daniel R.A."/>
            <person name="Denizot F."/>
            <person name="Devine K.M."/>
            <person name="Duesterhoeft A."/>
            <person name="Ehrlich S.D."/>
            <person name="Emmerson P.T."/>
            <person name="Entian K.-D."/>
            <person name="Errington J."/>
            <person name="Fabret C."/>
            <person name="Ferrari E."/>
            <person name="Foulger D."/>
            <person name="Fritz C."/>
            <person name="Fujita M."/>
            <person name="Fujita Y."/>
            <person name="Fuma S."/>
            <person name="Galizzi A."/>
            <person name="Galleron N."/>
            <person name="Ghim S.-Y."/>
            <person name="Glaser P."/>
            <person name="Goffeau A."/>
            <person name="Golightly E.J."/>
            <person name="Grandi G."/>
            <person name="Guiseppi G."/>
            <person name="Guy B.J."/>
            <person name="Haga K."/>
            <person name="Haiech J."/>
            <person name="Harwood C.R."/>
            <person name="Henaut A."/>
            <person name="Hilbert H."/>
            <person name="Holsappel S."/>
            <person name="Hosono S."/>
            <person name="Hullo M.-F."/>
            <person name="Itaya M."/>
            <person name="Jones L.-M."/>
            <person name="Joris B."/>
            <person name="Karamata D."/>
            <person name="Kasahara Y."/>
            <person name="Klaerr-Blanchard M."/>
            <person name="Klein C."/>
            <person name="Kobayashi Y."/>
            <person name="Koetter P."/>
            <person name="Koningstein G."/>
            <person name="Krogh S."/>
            <person name="Kumano M."/>
            <person name="Kurita K."/>
            <person name="Lapidus A."/>
            <person name="Lardinois S."/>
            <person name="Lauber J."/>
            <person name="Lazarevic V."/>
            <person name="Lee S.-M."/>
            <person name="Levine A."/>
            <person name="Liu H."/>
            <person name="Masuda S."/>
            <person name="Mauel C."/>
            <person name="Medigue C."/>
            <person name="Medina N."/>
            <person name="Mellado R.P."/>
            <person name="Mizuno M."/>
            <person name="Moestl D."/>
            <person name="Nakai S."/>
            <person name="Noback M."/>
            <person name="Noone D."/>
            <person name="O'Reilly M."/>
            <person name="Ogawa K."/>
            <person name="Ogiwara A."/>
            <person name="Oudega B."/>
            <person name="Park S.-H."/>
            <person name="Parro V."/>
            <person name="Pohl T.M."/>
            <person name="Portetelle D."/>
            <person name="Porwollik S."/>
            <person name="Prescott A.M."/>
            <person name="Presecan E."/>
            <person name="Pujic P."/>
            <person name="Purnelle B."/>
            <person name="Rapoport G."/>
            <person name="Rey M."/>
            <person name="Reynolds S."/>
            <person name="Rieger M."/>
            <person name="Rivolta C."/>
            <person name="Rocha E."/>
            <person name="Roche B."/>
            <person name="Rose M."/>
            <person name="Sadaie Y."/>
            <person name="Sato T."/>
            <person name="Scanlan E."/>
            <person name="Schleich S."/>
            <person name="Schroeter R."/>
            <person name="Scoffone F."/>
            <person name="Sekiguchi J."/>
            <person name="Sekowska A."/>
            <person name="Seror S.J."/>
            <person name="Serror P."/>
            <person name="Shin B.-S."/>
            <person name="Soldo B."/>
            <person name="Sorokin A."/>
            <person name="Tacconi E."/>
            <person name="Takagi T."/>
            <person name="Takahashi H."/>
            <person name="Takemaru K."/>
            <person name="Takeuchi M."/>
            <person name="Tamakoshi A."/>
            <person name="Tanaka T."/>
            <person name="Terpstra P."/>
            <person name="Tognoni A."/>
            <person name="Tosato V."/>
            <person name="Uchiyama S."/>
            <person name="Vandenbol M."/>
            <person name="Vannier F."/>
            <person name="Vassarotti A."/>
            <person name="Viari A."/>
            <person name="Wambutt R."/>
            <person name="Wedler E."/>
            <person name="Wedler H."/>
            <person name="Weitzenegger T."/>
            <person name="Winters P."/>
            <person name="Wipat A."/>
            <person name="Yamamoto H."/>
            <person name="Yamane K."/>
            <person name="Yasumoto K."/>
            <person name="Yata K."/>
            <person name="Yoshida K."/>
            <person name="Yoshikawa H.-F."/>
            <person name="Zumstein E."/>
            <person name="Yoshikawa H."/>
            <person name="Danchin A."/>
        </authorList>
    </citation>
    <scope>NUCLEOTIDE SEQUENCE [LARGE SCALE GENOMIC DNA]</scope>
    <source>
        <strain>168</strain>
    </source>
</reference>
<reference key="2">
    <citation type="journal article" date="2001" name="J. Biol. Chem.">
        <title>4'-phosphopantetheine transfer in primary and secondary metabolism of Bacillus subtilis.</title>
        <authorList>
            <person name="Mootz H.D."/>
            <person name="Finking R."/>
            <person name="Marahiel M.A."/>
        </authorList>
    </citation>
    <scope>IDENTIFICATION</scope>
    <scope>PHOSPHOPANTETHEINYLATION</scope>
</reference>
<reference key="3">
    <citation type="journal article" date="2006" name="Proc. Natl. Acad. Sci. U.S.A.">
        <title>Convergence of isoprene and polyketide biosynthetic machinery: isoprenyl-S-carrier proteins in the pksX pathway of Bacillus subtilis.</title>
        <authorList>
            <person name="Calderone C.T."/>
            <person name="Kowtoniuk W.E."/>
            <person name="Kelleher N.L."/>
            <person name="Walsh C.T."/>
            <person name="Dorrestein P.C."/>
        </authorList>
    </citation>
    <scope>FUNCTION</scope>
</reference>
<reference key="4">
    <citation type="journal article" date="2007" name="Proc. Natl. Acad. Sci. U.S.A.">
        <title>A singular enzymatic megacomplex from Bacillus subtilis.</title>
        <authorList>
            <person name="Straight P.D."/>
            <person name="Fischbach M.A."/>
            <person name="Walsh C.T."/>
            <person name="Rudner D.Z."/>
            <person name="Kolter R."/>
        </authorList>
    </citation>
    <scope>SUBCELLULAR LOCATION</scope>
    <source>
        <strain>168 / Marburg / ATCC 6051 / DSM 10 / JCM 1465 / NBRC 13719 / NCIMB 3610 / NRRL NRS-744 / VKM B-501</strain>
    </source>
</reference>
<reference key="5">
    <citation type="journal article" date="2007" name="Proc. Natl. Acad. Sci. U.S.A.">
        <title>The identification of bacillaene, the product of the PksX megacomplex in Bacillus subtilis.</title>
        <authorList>
            <person name="Butcher R.A."/>
            <person name="Schroeder F.C."/>
            <person name="Fischbach M.A."/>
            <person name="Straight P.D."/>
            <person name="Kolter R."/>
            <person name="Walsh C.T."/>
            <person name="Clardy J."/>
        </authorList>
    </citation>
    <scope>FUNCTION IN BACILLAENE BIOSYNTHESIS</scope>
    <source>
        <strain>168 / Marburg / ATCC 6051 / DSM 10 / JCM 1465 / NBRC 13719 / NCIMB 3610 / NRRL NRS-744 / VKM B-501</strain>
    </source>
</reference>
<gene>
    <name type="primary">acpK</name>
    <name type="ordered locus">BSU17130</name>
</gene>